<keyword id="KW-0007">Acetylation</keyword>
<keyword id="KW-0175">Coiled coil</keyword>
<keyword id="KW-0903">Direct protein sequencing</keyword>
<keyword id="KW-0256">Endoplasmic reticulum</keyword>
<keyword id="KW-0931">ER-Golgi transport</keyword>
<keyword id="KW-0333">Golgi apparatus</keyword>
<keyword id="KW-0472">Membrane</keyword>
<keyword id="KW-0597">Phosphoprotein</keyword>
<keyword id="KW-0653">Protein transport</keyword>
<keyword id="KW-0812">Transmembrane</keyword>
<keyword id="KW-1133">Transmembrane helix</keyword>
<keyword id="KW-0813">Transport</keyword>
<organism>
    <name type="scientific">Cricetulus griseus</name>
    <name type="common">Chinese hamster</name>
    <name type="synonym">Cricetulus barabensis griseus</name>
    <dbReference type="NCBI Taxonomy" id="10029"/>
    <lineage>
        <taxon>Eukaryota</taxon>
        <taxon>Metazoa</taxon>
        <taxon>Chordata</taxon>
        <taxon>Craniata</taxon>
        <taxon>Vertebrata</taxon>
        <taxon>Euteleostomi</taxon>
        <taxon>Mammalia</taxon>
        <taxon>Eutheria</taxon>
        <taxon>Euarchontoglires</taxon>
        <taxon>Glires</taxon>
        <taxon>Rodentia</taxon>
        <taxon>Myomorpha</taxon>
        <taxon>Muroidea</taxon>
        <taxon>Cricetidae</taxon>
        <taxon>Cricetinae</taxon>
        <taxon>Cricetulus</taxon>
    </lineage>
</organism>
<reference evidence="8 9" key="1">
    <citation type="journal article" date="1997" name="J. Cell Biol.">
        <title>ERS-24, a mammalian v-SNARE implicated in vesicle traffic between the ER and the Golgi.</title>
        <authorList>
            <person name="Paek I."/>
            <person name="Orci L."/>
            <person name="Ravazzola M."/>
            <person name="Erdjument-Bromage H."/>
            <person name="Amherdt M."/>
            <person name="Tempst P."/>
            <person name="Soellner T.H."/>
            <person name="Rothman J.E."/>
        </authorList>
    </citation>
    <scope>NUCLEOTIDE SEQUENCE [MRNA]</scope>
    <scope>PROTEIN SEQUENCE OF 10-38; 82-98; 102-119 AND 134-159</scope>
    <scope>TOPOLOGY</scope>
    <source>
        <tissue evidence="6">Ovary</tissue>
    </source>
</reference>
<sequence length="215" mass="24669">MVLLTMIARVADGLPLAASMQEDEQSGRDLQQYQSQAKQLFRKLNEQSPTRCTLGAGAMTFHYIIEQGVCYLVLCEAAFPKKLAFAYLEDLHSEFDEQHGKKVPTVSRPYSFIEFDTFIQKTKKLYIDSRARRNLGSINTELQDVQRIMVANIEEVLQRGEALSALDSKANNLSSLSKKYRQDAKYLNMRSTYAKLAAVAVFFIMLIVYVRFWWL</sequence>
<comment type="function">
    <text evidence="1 2">SNARE involved in targeting and fusion of ER-derived transport vesicles with the Golgi complex as well as Golgi-derived retrograde transport vesicles with the ER.</text>
</comment>
<comment type="subunit">
    <text evidence="1 2">Interacts with STX17. Component of two distinct SNARE complexes consisting of STX5, GOSR2/BOS1, BET1 and SEC22B or STX18, USE1L, BNIP1/SEC20L and SEC22B. YKT6 can probably replace SEC22B as subunit of either complex (By similarity). Interacts with the COPII Sec23/24 complex composed of SEC23A and SEC24A; recruits SEC22B into COPII-coated vesicles to allow its transport from the endoplasmic reticulum to the Golgi (By similarity). Interacts with BET1 (By similarity).</text>
</comment>
<comment type="subcellular location">
    <subcellularLocation>
        <location evidence="2">Endoplasmic reticulum membrane</location>
        <topology evidence="2">Single-pass type IV membrane protein</topology>
    </subcellularLocation>
    <subcellularLocation>
        <location evidence="2">Endoplasmic reticulum-Golgi intermediate compartment membrane</location>
    </subcellularLocation>
    <subcellularLocation>
        <location evidence="2">Golgi apparatus</location>
        <location evidence="2">cis-Golgi network membrane</location>
    </subcellularLocation>
    <subcellularLocation>
        <location evidence="2">Golgi apparatus</location>
        <location evidence="2">trans-Golgi network membrane</location>
    </subcellularLocation>
    <subcellularLocation>
        <location evidence="1">Melanosome</location>
    </subcellularLocation>
    <text evidence="2">Concentrated most in the intermediate compartment/cis-Golgi network and the cis-Golgi cisternae 1 and 2. Greatly reduced in concentration at the trans end of the Golgi apparatus.</text>
</comment>
<comment type="similarity">
    <text evidence="3">Belongs to the synaptobrevin family.</text>
</comment>
<feature type="chain" id="PRO_0000253047" description="Vesicle-trafficking protein SEC22b">
    <location>
        <begin position="1"/>
        <end position="215"/>
    </location>
</feature>
<feature type="topological domain" description="Cytoplasmic" evidence="6">
    <location>
        <begin position="1"/>
        <end position="194"/>
    </location>
</feature>
<feature type="transmembrane region" description="Helical; Anchor for type IV membrane protein" evidence="3">
    <location>
        <begin position="195"/>
        <end position="215"/>
    </location>
</feature>
<feature type="domain" description="Longin" evidence="4">
    <location>
        <begin position="6"/>
        <end position="119"/>
    </location>
</feature>
<feature type="domain" description="v-SNARE coiled-coil homology" evidence="5">
    <location>
        <begin position="134"/>
        <end position="194"/>
    </location>
</feature>
<feature type="modified residue" description="N6-acetyllysine" evidence="1">
    <location>
        <position position="38"/>
    </location>
</feature>
<feature type="modified residue" description="Phosphoserine" evidence="1">
    <location>
        <position position="137"/>
    </location>
</feature>
<feature type="modified residue" description="Phosphothreonine" evidence="1">
    <location>
        <position position="140"/>
    </location>
</feature>
<feature type="modified residue" description="Phosphoserine" evidence="1">
    <location>
        <position position="164"/>
    </location>
</feature>
<feature type="modified residue" description="Phosphoserine" evidence="1">
    <location>
        <position position="168"/>
    </location>
</feature>
<feature type="modified residue" description="Phosphoserine" evidence="1">
    <location>
        <position position="174"/>
    </location>
</feature>
<feature type="modified residue" description="Phosphoserine" evidence="1">
    <location>
        <position position="177"/>
    </location>
</feature>
<proteinExistence type="evidence at protein level"/>
<evidence type="ECO:0000250" key="1">
    <source>
        <dbReference type="UniProtKB" id="O75396"/>
    </source>
</evidence>
<evidence type="ECO:0000250" key="2">
    <source>
        <dbReference type="UniProtKB" id="Q4KM74"/>
    </source>
</evidence>
<evidence type="ECO:0000255" key="3"/>
<evidence type="ECO:0000255" key="4">
    <source>
        <dbReference type="PROSITE-ProRule" id="PRU00231"/>
    </source>
</evidence>
<evidence type="ECO:0000255" key="5">
    <source>
        <dbReference type="PROSITE-ProRule" id="PRU00290"/>
    </source>
</evidence>
<evidence type="ECO:0000269" key="6">
    <source>
    </source>
</evidence>
<evidence type="ECO:0000303" key="7">
    <source>
    </source>
</evidence>
<evidence type="ECO:0000305" key="8"/>
<evidence type="ECO:0000312" key="9">
    <source>
        <dbReference type="EMBL" id="AAB51513.1"/>
    </source>
</evidence>
<accession>O08595</accession>
<gene>
    <name type="primary">Sec22b</name>
    <name evidence="7" type="synonym">Ers-24</name>
</gene>
<name>SC22B_CRIGR</name>
<dbReference type="EMBL" id="U91742">
    <property type="protein sequence ID" value="AAB51513.1"/>
    <property type="molecule type" value="mRNA"/>
</dbReference>
<dbReference type="RefSeq" id="NP_001233675.1">
    <property type="nucleotide sequence ID" value="NM_001246746.1"/>
</dbReference>
<dbReference type="SMR" id="O08595"/>
<dbReference type="PaxDb" id="10029-NP_001233675.1"/>
<dbReference type="GeneID" id="100689313"/>
<dbReference type="KEGG" id="cge:100689313"/>
<dbReference type="CTD" id="9554"/>
<dbReference type="eggNOG" id="KOG0862">
    <property type="taxonomic scope" value="Eukaryota"/>
</dbReference>
<dbReference type="OrthoDB" id="1719357at2759"/>
<dbReference type="Proteomes" id="UP000694386">
    <property type="component" value="Unplaced"/>
</dbReference>
<dbReference type="Proteomes" id="UP001108280">
    <property type="component" value="Chromosome 1"/>
</dbReference>
<dbReference type="GO" id="GO:0005789">
    <property type="term" value="C:endoplasmic reticulum membrane"/>
    <property type="evidence" value="ECO:0007669"/>
    <property type="project" value="UniProtKB-SubCell"/>
</dbReference>
<dbReference type="GO" id="GO:0033116">
    <property type="term" value="C:endoplasmic reticulum-Golgi intermediate compartment membrane"/>
    <property type="evidence" value="ECO:0007669"/>
    <property type="project" value="UniProtKB-SubCell"/>
</dbReference>
<dbReference type="GO" id="GO:0005794">
    <property type="term" value="C:Golgi apparatus"/>
    <property type="evidence" value="ECO:0007669"/>
    <property type="project" value="UniProtKB-SubCell"/>
</dbReference>
<dbReference type="GO" id="GO:0042470">
    <property type="term" value="C:melanosome"/>
    <property type="evidence" value="ECO:0007669"/>
    <property type="project" value="UniProtKB-SubCell"/>
</dbReference>
<dbReference type="GO" id="GO:0005484">
    <property type="term" value="F:SNAP receptor activity"/>
    <property type="evidence" value="ECO:0007669"/>
    <property type="project" value="InterPro"/>
</dbReference>
<dbReference type="GO" id="GO:0006888">
    <property type="term" value="P:endoplasmic reticulum to Golgi vesicle-mediated transport"/>
    <property type="evidence" value="ECO:0007669"/>
    <property type="project" value="InterPro"/>
</dbReference>
<dbReference type="GO" id="GO:0015031">
    <property type="term" value="P:protein transport"/>
    <property type="evidence" value="ECO:0007669"/>
    <property type="project" value="UniProtKB-KW"/>
</dbReference>
<dbReference type="GO" id="GO:0006890">
    <property type="term" value="P:retrograde vesicle-mediated transport, Golgi to endoplasmic reticulum"/>
    <property type="evidence" value="ECO:0007669"/>
    <property type="project" value="InterPro"/>
</dbReference>
<dbReference type="CDD" id="cd14824">
    <property type="entry name" value="Longin"/>
    <property type="match status" value="1"/>
</dbReference>
<dbReference type="CDD" id="cd15866">
    <property type="entry name" value="R-SNARE_SEC22"/>
    <property type="match status" value="1"/>
</dbReference>
<dbReference type="FunFam" id="1.20.5.110:FF:000019">
    <property type="entry name" value="Vesicle-trafficking protein SEC22b"/>
    <property type="match status" value="1"/>
</dbReference>
<dbReference type="FunFam" id="3.30.450.50:FF:000004">
    <property type="entry name" value="vesicle-trafficking protein SEC22b"/>
    <property type="match status" value="1"/>
</dbReference>
<dbReference type="Gene3D" id="1.20.5.110">
    <property type="match status" value="1"/>
</dbReference>
<dbReference type="Gene3D" id="3.30.450.50">
    <property type="entry name" value="Longin domain"/>
    <property type="match status" value="1"/>
</dbReference>
<dbReference type="InterPro" id="IPR011012">
    <property type="entry name" value="Longin-like_dom_sf"/>
</dbReference>
<dbReference type="InterPro" id="IPR010908">
    <property type="entry name" value="Longin_dom"/>
</dbReference>
<dbReference type="InterPro" id="IPR044565">
    <property type="entry name" value="Sec22"/>
</dbReference>
<dbReference type="InterPro" id="IPR001388">
    <property type="entry name" value="Synaptobrevin-like"/>
</dbReference>
<dbReference type="InterPro" id="IPR042855">
    <property type="entry name" value="V_SNARE_CC"/>
</dbReference>
<dbReference type="PANTHER" id="PTHR45837">
    <property type="entry name" value="VESICLE-TRAFFICKING PROTEIN SEC22B"/>
    <property type="match status" value="1"/>
</dbReference>
<dbReference type="Pfam" id="PF13774">
    <property type="entry name" value="Longin"/>
    <property type="match status" value="1"/>
</dbReference>
<dbReference type="Pfam" id="PF00957">
    <property type="entry name" value="Synaptobrevin"/>
    <property type="match status" value="1"/>
</dbReference>
<dbReference type="PRINTS" id="PR00219">
    <property type="entry name" value="SYNAPTOBREVN"/>
</dbReference>
<dbReference type="SMART" id="SM01270">
    <property type="entry name" value="Longin"/>
    <property type="match status" value="1"/>
</dbReference>
<dbReference type="SUPFAM" id="SSF58038">
    <property type="entry name" value="SNARE fusion complex"/>
    <property type="match status" value="1"/>
</dbReference>
<dbReference type="SUPFAM" id="SSF64356">
    <property type="entry name" value="SNARE-like"/>
    <property type="match status" value="1"/>
</dbReference>
<dbReference type="PROSITE" id="PS50859">
    <property type="entry name" value="LONGIN"/>
    <property type="match status" value="1"/>
</dbReference>
<dbReference type="PROSITE" id="PS50892">
    <property type="entry name" value="V_SNARE"/>
    <property type="match status" value="1"/>
</dbReference>
<protein>
    <recommendedName>
        <fullName>Vesicle-trafficking protein SEC22b</fullName>
    </recommendedName>
    <alternativeName>
        <fullName>ER-Golgi SNARE of 24 kDa</fullName>
        <shortName>ERS-24</shortName>
        <shortName>ERS24</shortName>
    </alternativeName>
    <alternativeName>
        <fullName>SEC22 vesicle-trafficking protein homolog B</fullName>
    </alternativeName>
</protein>